<organism>
    <name type="scientific">Ignicoccus hospitalis (strain KIN4/I / DSM 18386 / JCM 14125)</name>
    <dbReference type="NCBI Taxonomy" id="453591"/>
    <lineage>
        <taxon>Archaea</taxon>
        <taxon>Thermoproteota</taxon>
        <taxon>Thermoprotei</taxon>
        <taxon>Desulfurococcales</taxon>
        <taxon>Desulfurococcaceae</taxon>
        <taxon>Ignicoccus</taxon>
    </lineage>
</organism>
<keyword id="KW-1185">Reference proteome</keyword>
<keyword id="KW-0687">Ribonucleoprotein</keyword>
<keyword id="KW-0689">Ribosomal protein</keyword>
<keyword id="KW-0694">RNA-binding</keyword>
<keyword id="KW-0699">rRNA-binding</keyword>
<dbReference type="EMBL" id="CP000816">
    <property type="protein sequence ID" value="ABU81431.1"/>
    <property type="molecule type" value="Genomic_DNA"/>
</dbReference>
<dbReference type="RefSeq" id="WP_011998283.1">
    <property type="nucleotide sequence ID" value="NC_009776.1"/>
</dbReference>
<dbReference type="SMR" id="A8A929"/>
<dbReference type="STRING" id="453591.Igni_0247"/>
<dbReference type="GeneID" id="5561990"/>
<dbReference type="KEGG" id="iho:Igni_0247"/>
<dbReference type="eggNOG" id="arCOG04255">
    <property type="taxonomic scope" value="Archaea"/>
</dbReference>
<dbReference type="HOGENOM" id="CLU_115574_0_1_2"/>
<dbReference type="OrthoDB" id="45154at2157"/>
<dbReference type="PhylomeDB" id="A8A929"/>
<dbReference type="Proteomes" id="UP000000262">
    <property type="component" value="Chromosome"/>
</dbReference>
<dbReference type="GO" id="GO:0015935">
    <property type="term" value="C:small ribosomal subunit"/>
    <property type="evidence" value="ECO:0007669"/>
    <property type="project" value="InterPro"/>
</dbReference>
<dbReference type="GO" id="GO:0019843">
    <property type="term" value="F:rRNA binding"/>
    <property type="evidence" value="ECO:0007669"/>
    <property type="project" value="UniProtKB-UniRule"/>
</dbReference>
<dbReference type="GO" id="GO:0003735">
    <property type="term" value="F:structural constituent of ribosome"/>
    <property type="evidence" value="ECO:0007669"/>
    <property type="project" value="InterPro"/>
</dbReference>
<dbReference type="GO" id="GO:0006412">
    <property type="term" value="P:translation"/>
    <property type="evidence" value="ECO:0007669"/>
    <property type="project" value="UniProtKB-UniRule"/>
</dbReference>
<dbReference type="CDD" id="cd03367">
    <property type="entry name" value="Ribosomal_S23"/>
    <property type="match status" value="1"/>
</dbReference>
<dbReference type="FunFam" id="2.40.50.140:FF:000007">
    <property type="entry name" value="40S ribosomal protein S23"/>
    <property type="match status" value="1"/>
</dbReference>
<dbReference type="Gene3D" id="2.40.50.140">
    <property type="entry name" value="Nucleic acid-binding proteins"/>
    <property type="match status" value="1"/>
</dbReference>
<dbReference type="HAMAP" id="MF_00403_A">
    <property type="entry name" value="Ribosomal_uS12_A"/>
    <property type="match status" value="1"/>
</dbReference>
<dbReference type="InterPro" id="IPR012340">
    <property type="entry name" value="NA-bd_OB-fold"/>
</dbReference>
<dbReference type="InterPro" id="IPR006032">
    <property type="entry name" value="Ribosomal_uS12"/>
</dbReference>
<dbReference type="InterPro" id="IPR022863">
    <property type="entry name" value="Ribosomal_uS12_arc"/>
</dbReference>
<dbReference type="InterPro" id="IPR005680">
    <property type="entry name" value="Ribosomal_uS12_euk/arc"/>
</dbReference>
<dbReference type="NCBIfam" id="NF003254">
    <property type="entry name" value="PRK04211.1"/>
    <property type="match status" value="1"/>
</dbReference>
<dbReference type="NCBIfam" id="TIGR00982">
    <property type="entry name" value="uS12_E_A"/>
    <property type="match status" value="1"/>
</dbReference>
<dbReference type="PANTHER" id="PTHR11652">
    <property type="entry name" value="30S RIBOSOMAL PROTEIN S12 FAMILY MEMBER"/>
    <property type="match status" value="1"/>
</dbReference>
<dbReference type="Pfam" id="PF00164">
    <property type="entry name" value="Ribosom_S12_S23"/>
    <property type="match status" value="1"/>
</dbReference>
<dbReference type="PIRSF" id="PIRSF002133">
    <property type="entry name" value="Ribosomal_S12/S23"/>
    <property type="match status" value="1"/>
</dbReference>
<dbReference type="SUPFAM" id="SSF50249">
    <property type="entry name" value="Nucleic acid-binding proteins"/>
    <property type="match status" value="1"/>
</dbReference>
<dbReference type="PROSITE" id="PS00055">
    <property type="entry name" value="RIBOSOMAL_S12"/>
    <property type="match status" value="1"/>
</dbReference>
<protein>
    <recommendedName>
        <fullName evidence="1">Small ribosomal subunit protein uS12</fullName>
    </recommendedName>
    <alternativeName>
        <fullName evidence="2">30S ribosomal protein S12</fullName>
    </alternativeName>
</protein>
<name>RS12_IGNH4</name>
<feature type="chain" id="PRO_1000049788" description="Small ribosomal subunit protein uS12">
    <location>
        <begin position="1"/>
        <end position="147"/>
    </location>
</feature>
<accession>A8A929</accession>
<comment type="function">
    <text evidence="1">With S4 and S5 plays an important role in translational accuracy. Located at the interface of the 30S and 50S subunits.</text>
</comment>
<comment type="subunit">
    <text evidence="1">Part of the 30S ribosomal subunit.</text>
</comment>
<comment type="similarity">
    <text evidence="1">Belongs to the universal ribosomal protein uS12 family.</text>
</comment>
<gene>
    <name evidence="1" type="primary">rps12</name>
    <name type="ordered locus">Igni_0247</name>
</gene>
<sequence length="147" mass="16265">MPGKKAPNGLFAARKLERKRLKFRWSQREFKRRMLKLKEKYDPLEGAPMARGIVLEKVGVEARKPNSAVRKCVRVQLVKNGKVVTAFVPGDGGLNVISEHDEVVIVGIGGPRGRSMGDIPGVRYKVVLVNGVSLDAILKGKKQKPVR</sequence>
<evidence type="ECO:0000255" key="1">
    <source>
        <dbReference type="HAMAP-Rule" id="MF_00403"/>
    </source>
</evidence>
<evidence type="ECO:0000305" key="2"/>
<reference key="1">
    <citation type="journal article" date="2008" name="Genome Biol.">
        <title>A genomic analysis of the archaeal system Ignicoccus hospitalis-Nanoarchaeum equitans.</title>
        <authorList>
            <person name="Podar M."/>
            <person name="Anderson I."/>
            <person name="Makarova K.S."/>
            <person name="Elkins J.G."/>
            <person name="Ivanova N."/>
            <person name="Wall M.A."/>
            <person name="Lykidis A."/>
            <person name="Mavromatis K."/>
            <person name="Sun H."/>
            <person name="Hudson M.E."/>
            <person name="Chen W."/>
            <person name="Deciu C."/>
            <person name="Hutchison D."/>
            <person name="Eads J.R."/>
            <person name="Anderson A."/>
            <person name="Fernandes F."/>
            <person name="Szeto E."/>
            <person name="Lapidus A."/>
            <person name="Kyrpides N.C."/>
            <person name="Saier M.H. Jr."/>
            <person name="Richardson P.M."/>
            <person name="Rachel R."/>
            <person name="Huber H."/>
            <person name="Eisen J.A."/>
            <person name="Koonin E.V."/>
            <person name="Keller M."/>
            <person name="Stetter K.O."/>
        </authorList>
    </citation>
    <scope>NUCLEOTIDE SEQUENCE [LARGE SCALE GENOMIC DNA]</scope>
    <source>
        <strain>KIN4/I / DSM 18386 / JCM 14125</strain>
    </source>
</reference>
<proteinExistence type="inferred from homology"/>